<organism>
    <name type="scientific">Gloeothece citriformis (strain PCC 7424)</name>
    <name type="common">Cyanothece sp. (strain PCC 7424)</name>
    <dbReference type="NCBI Taxonomy" id="65393"/>
    <lineage>
        <taxon>Bacteria</taxon>
        <taxon>Bacillati</taxon>
        <taxon>Cyanobacteriota</taxon>
        <taxon>Cyanophyceae</taxon>
        <taxon>Oscillatoriophycideae</taxon>
        <taxon>Chroococcales</taxon>
        <taxon>Aphanothecaceae</taxon>
        <taxon>Gloeothece</taxon>
        <taxon>Gloeothece citriformis</taxon>
    </lineage>
</organism>
<keyword id="KW-0067">ATP-binding</keyword>
<keyword id="KW-0963">Cytoplasm</keyword>
<keyword id="KW-0436">Ligase</keyword>
<keyword id="KW-0547">Nucleotide-binding</keyword>
<keyword id="KW-1185">Reference proteome</keyword>
<comment type="function">
    <text evidence="1">Catalyzes the conversion of 3'-phosphate to a 2',3'-cyclic phosphodiester at the end of RNA. The mechanism of action of the enzyme occurs in 3 steps: (A) adenylation of the enzyme by ATP; (B) transfer of adenylate to an RNA-N3'P to produce RNA-N3'PP5'A; (C) and attack of the adjacent 2'-hydroxyl on the 3'-phosphorus in the diester linkage to produce the cyclic end product. The biological role of this enzyme is unknown but it is likely to function in some aspects of cellular RNA processing.</text>
</comment>
<comment type="catalytic activity">
    <reaction evidence="1">
        <text>a 3'-end 3'-phospho-ribonucleotide-RNA + ATP = a 3'-end 2',3'-cyclophospho-ribonucleotide-RNA + AMP + diphosphate</text>
        <dbReference type="Rhea" id="RHEA:23976"/>
        <dbReference type="Rhea" id="RHEA-COMP:10463"/>
        <dbReference type="Rhea" id="RHEA-COMP:10464"/>
        <dbReference type="ChEBI" id="CHEBI:30616"/>
        <dbReference type="ChEBI" id="CHEBI:33019"/>
        <dbReference type="ChEBI" id="CHEBI:83062"/>
        <dbReference type="ChEBI" id="CHEBI:83064"/>
        <dbReference type="ChEBI" id="CHEBI:456215"/>
        <dbReference type="EC" id="6.5.1.4"/>
    </reaction>
</comment>
<comment type="subcellular location">
    <subcellularLocation>
        <location evidence="1">Cytoplasm</location>
    </subcellularLocation>
</comment>
<comment type="similarity">
    <text evidence="1">Belongs to the RNA 3'-terminal cyclase family. Type 1 subfamily.</text>
</comment>
<dbReference type="EC" id="6.5.1.4" evidence="1"/>
<dbReference type="EMBL" id="CP001291">
    <property type="protein sequence ID" value="ACK70258.1"/>
    <property type="molecule type" value="Genomic_DNA"/>
</dbReference>
<dbReference type="RefSeq" id="WP_012599201.1">
    <property type="nucleotide sequence ID" value="NC_011729.1"/>
</dbReference>
<dbReference type="SMR" id="B7KCF3"/>
<dbReference type="STRING" id="65393.PCC7424_1826"/>
<dbReference type="KEGG" id="cyc:PCC7424_1826"/>
<dbReference type="eggNOG" id="COG0430">
    <property type="taxonomic scope" value="Bacteria"/>
</dbReference>
<dbReference type="HOGENOM" id="CLU_027882_0_0_3"/>
<dbReference type="OrthoDB" id="9789235at2"/>
<dbReference type="Proteomes" id="UP000002384">
    <property type="component" value="Chromosome"/>
</dbReference>
<dbReference type="GO" id="GO:0005737">
    <property type="term" value="C:cytoplasm"/>
    <property type="evidence" value="ECO:0007669"/>
    <property type="project" value="UniProtKB-SubCell"/>
</dbReference>
<dbReference type="GO" id="GO:0005524">
    <property type="term" value="F:ATP binding"/>
    <property type="evidence" value="ECO:0007669"/>
    <property type="project" value="UniProtKB-KW"/>
</dbReference>
<dbReference type="GO" id="GO:0003963">
    <property type="term" value="F:RNA-3'-phosphate cyclase activity"/>
    <property type="evidence" value="ECO:0007669"/>
    <property type="project" value="UniProtKB-UniRule"/>
</dbReference>
<dbReference type="GO" id="GO:0006396">
    <property type="term" value="P:RNA processing"/>
    <property type="evidence" value="ECO:0007669"/>
    <property type="project" value="InterPro"/>
</dbReference>
<dbReference type="Gene3D" id="3.65.10.20">
    <property type="entry name" value="RNA 3'-terminal phosphate cyclase domain"/>
    <property type="match status" value="1"/>
</dbReference>
<dbReference type="Gene3D" id="3.30.360.20">
    <property type="entry name" value="RNA 3'-terminal phosphate cyclase, insert domain"/>
    <property type="match status" value="1"/>
</dbReference>
<dbReference type="HAMAP" id="MF_00200">
    <property type="entry name" value="RTC"/>
    <property type="match status" value="1"/>
</dbReference>
<dbReference type="InterPro" id="IPR013791">
    <property type="entry name" value="RNA3'-term_phos_cycl_insert"/>
</dbReference>
<dbReference type="InterPro" id="IPR023797">
    <property type="entry name" value="RNA3'_phos_cyclase_dom"/>
</dbReference>
<dbReference type="InterPro" id="IPR037136">
    <property type="entry name" value="RNA3'_phos_cyclase_dom_sf"/>
</dbReference>
<dbReference type="InterPro" id="IPR000228">
    <property type="entry name" value="RNA3'_term_phos_cyc"/>
</dbReference>
<dbReference type="InterPro" id="IPR017770">
    <property type="entry name" value="RNA3'_term_phos_cyc_type_1"/>
</dbReference>
<dbReference type="InterPro" id="IPR013792">
    <property type="entry name" value="RNA3'P_cycl/enolpyr_Trfase_a/b"/>
</dbReference>
<dbReference type="InterPro" id="IPR036553">
    <property type="entry name" value="RPTC_insert"/>
</dbReference>
<dbReference type="NCBIfam" id="NF003246">
    <property type="entry name" value="PRK04204.1-2"/>
    <property type="match status" value="1"/>
</dbReference>
<dbReference type="NCBIfam" id="TIGR03399">
    <property type="entry name" value="RNA_3prim_cycl"/>
    <property type="match status" value="1"/>
</dbReference>
<dbReference type="PANTHER" id="PTHR11096">
    <property type="entry name" value="RNA 3' TERMINAL PHOSPHATE CYCLASE"/>
    <property type="match status" value="1"/>
</dbReference>
<dbReference type="PANTHER" id="PTHR11096:SF0">
    <property type="entry name" value="RNA 3'-TERMINAL PHOSPHATE CYCLASE"/>
    <property type="match status" value="1"/>
</dbReference>
<dbReference type="Pfam" id="PF01137">
    <property type="entry name" value="RTC"/>
    <property type="match status" value="1"/>
</dbReference>
<dbReference type="Pfam" id="PF05189">
    <property type="entry name" value="RTC_insert"/>
    <property type="match status" value="1"/>
</dbReference>
<dbReference type="PIRSF" id="PIRSF005378">
    <property type="entry name" value="RNA3'_term_phos_cycl_euk"/>
    <property type="match status" value="1"/>
</dbReference>
<dbReference type="SUPFAM" id="SSF55205">
    <property type="entry name" value="EPT/RTPC-like"/>
    <property type="match status" value="1"/>
</dbReference>
<dbReference type="SUPFAM" id="SSF52913">
    <property type="entry name" value="RNA 3'-terminal phosphate cyclase, RPTC, insert domain"/>
    <property type="match status" value="1"/>
</dbReference>
<feature type="chain" id="PRO_1000195095" description="RNA 3'-terminal phosphate cyclase">
    <location>
        <begin position="1"/>
        <end position="350"/>
    </location>
</feature>
<feature type="active site" description="Tele-AMP-histidine intermediate" evidence="1">
    <location>
        <position position="316"/>
    </location>
</feature>
<feature type="binding site" evidence="1">
    <location>
        <position position="107"/>
    </location>
    <ligand>
        <name>ATP</name>
        <dbReference type="ChEBI" id="CHEBI:30616"/>
    </ligand>
</feature>
<feature type="binding site" evidence="1">
    <location>
        <begin position="290"/>
        <end position="294"/>
    </location>
    <ligand>
        <name>ATP</name>
        <dbReference type="ChEBI" id="CHEBI:30616"/>
    </ligand>
</feature>
<gene>
    <name evidence="1" type="primary">rtcA</name>
    <name type="ordered locus">PCC7424_1826</name>
</gene>
<protein>
    <recommendedName>
        <fullName evidence="1">RNA 3'-terminal phosphate cyclase</fullName>
        <shortName evidence="1">RNA cyclase</shortName>
        <shortName evidence="1">RNA-3'-phosphate cyclase</shortName>
        <ecNumber evidence="1">6.5.1.4</ecNumber>
    </recommendedName>
</protein>
<name>RTCA_GLOC7</name>
<reference key="1">
    <citation type="journal article" date="2011" name="MBio">
        <title>Novel metabolic attributes of the genus Cyanothece, comprising a group of unicellular nitrogen-fixing Cyanobacteria.</title>
        <authorList>
            <person name="Bandyopadhyay A."/>
            <person name="Elvitigala T."/>
            <person name="Welsh E."/>
            <person name="Stockel J."/>
            <person name="Liberton M."/>
            <person name="Min H."/>
            <person name="Sherman L.A."/>
            <person name="Pakrasi H.B."/>
        </authorList>
    </citation>
    <scope>NUCLEOTIDE SEQUENCE [LARGE SCALE GENOMIC DNA]</scope>
    <source>
        <strain>PCC 7424</strain>
    </source>
</reference>
<evidence type="ECO:0000255" key="1">
    <source>
        <dbReference type="HAMAP-Rule" id="MF_00200"/>
    </source>
</evidence>
<accession>B7KCF3</accession>
<proteinExistence type="inferred from homology"/>
<sequence length="350" mass="38007">MLDIDGSWGEGGGQILRTTLSLSAITGQPIRLYQIRAGRQKPGLSAQHLTCVRAAATICNAEVRGDKLRSTLLEFIPTRPPQAGHYTFDVMDAQEGGSAGAVTLILQTILLPLAIASEESTVILKGGTHVAWSPPISYIEQVYLPLLSKLGLQTELHLQAWGWYPQGGGEVHLHIKGNCQLQGVELLERGALKQVKGLAVVTELPSHIPQRMAMRCEKLLQQAHVKGYVQPLRAKGVAPGAGVFLTSEYEHICAGFAALGRRGLPAESVAQNAVEQLLSFHQQDAPVEEFLGDQLLLPMILAQSPSQYRVAHISEHLKTNVQTISQFGLAQIDLNLEDRLVFVKPGHNLT</sequence>